<proteinExistence type="inferred from homology"/>
<sequence length="421" mass="44216">MPATDIDTAMLALGENARRASRAMMRATGAAKNHALQAMAEALRDNRAELQAANAQDIDAARAGGLEPALLDRLTLSDKAIDRMAEGLLQVAALPDPIGSTTASALRPNGMRVAQMRVPLGVIGIIYESRPNVTIDAAALCLKSGNATILRGGSEALHSNVALGRIVQAGLQAAALPAEAVQVVGTTDRAAVGKLITMTEHIDVIVPRGGKGLIARLASEARVPLIKHLDGNCHVYIDAAADPQKAHTIAFNAKTYRYGICGAMETLLVDAGVAVSILPRLAAAFSAHGVELRGCPRTLEIVPSATPATDDDWATEYLAPILAVRIVDSLDQAIEHIARWGSGHTDAIVTEDLSAAQRFQREVDSSSVYVNLPTCFADGFEYGLGAEIGISTNRLHARGPVGLEGLTTLKWVLNGDGQTRG</sequence>
<organism>
    <name type="scientific">Bordetella petrii (strain ATCC BAA-461 / DSM 12804 / CCUG 43448)</name>
    <dbReference type="NCBI Taxonomy" id="340100"/>
    <lineage>
        <taxon>Bacteria</taxon>
        <taxon>Pseudomonadati</taxon>
        <taxon>Pseudomonadota</taxon>
        <taxon>Betaproteobacteria</taxon>
        <taxon>Burkholderiales</taxon>
        <taxon>Alcaligenaceae</taxon>
        <taxon>Bordetella</taxon>
    </lineage>
</organism>
<gene>
    <name evidence="1" type="primary">proA</name>
    <name type="ordered locus">Bpet3327</name>
</gene>
<comment type="function">
    <text evidence="1">Catalyzes the NADPH-dependent reduction of L-glutamate 5-phosphate into L-glutamate 5-semialdehyde and phosphate. The product spontaneously undergoes cyclization to form 1-pyrroline-5-carboxylate.</text>
</comment>
<comment type="catalytic activity">
    <reaction evidence="1">
        <text>L-glutamate 5-semialdehyde + phosphate + NADP(+) = L-glutamyl 5-phosphate + NADPH + H(+)</text>
        <dbReference type="Rhea" id="RHEA:19541"/>
        <dbReference type="ChEBI" id="CHEBI:15378"/>
        <dbReference type="ChEBI" id="CHEBI:43474"/>
        <dbReference type="ChEBI" id="CHEBI:57783"/>
        <dbReference type="ChEBI" id="CHEBI:58066"/>
        <dbReference type="ChEBI" id="CHEBI:58274"/>
        <dbReference type="ChEBI" id="CHEBI:58349"/>
        <dbReference type="EC" id="1.2.1.41"/>
    </reaction>
</comment>
<comment type="pathway">
    <text evidence="1">Amino-acid biosynthesis; L-proline biosynthesis; L-glutamate 5-semialdehyde from L-glutamate: step 2/2.</text>
</comment>
<comment type="subcellular location">
    <subcellularLocation>
        <location evidence="1">Cytoplasm</location>
    </subcellularLocation>
</comment>
<comment type="similarity">
    <text evidence="1">Belongs to the gamma-glutamyl phosphate reductase family.</text>
</comment>
<accession>A9HWX2</accession>
<evidence type="ECO:0000255" key="1">
    <source>
        <dbReference type="HAMAP-Rule" id="MF_00412"/>
    </source>
</evidence>
<reference key="1">
    <citation type="journal article" date="2008" name="BMC Genomics">
        <title>The missing link: Bordetella petrii is endowed with both the metabolic versatility of environmental bacteria and virulence traits of pathogenic Bordetellae.</title>
        <authorList>
            <person name="Gross R."/>
            <person name="Guzman C.A."/>
            <person name="Sebaihia M."/>
            <person name="Martin dos Santos V.A.P."/>
            <person name="Pieper D.H."/>
            <person name="Koebnik R."/>
            <person name="Lechner M."/>
            <person name="Bartels D."/>
            <person name="Buhrmester J."/>
            <person name="Choudhuri J.V."/>
            <person name="Ebensen T."/>
            <person name="Gaigalat L."/>
            <person name="Herrmann S."/>
            <person name="Khachane A.N."/>
            <person name="Larisch C."/>
            <person name="Link S."/>
            <person name="Linke B."/>
            <person name="Meyer F."/>
            <person name="Mormann S."/>
            <person name="Nakunst D."/>
            <person name="Rueckert C."/>
            <person name="Schneiker-Bekel S."/>
            <person name="Schulze K."/>
            <person name="Voerholter F.-J."/>
            <person name="Yevsa T."/>
            <person name="Engle J.T."/>
            <person name="Goldman W.E."/>
            <person name="Puehler A."/>
            <person name="Goebel U.B."/>
            <person name="Goesmann A."/>
            <person name="Bloecker H."/>
            <person name="Kaiser O."/>
            <person name="Martinez-Arias R."/>
        </authorList>
    </citation>
    <scope>NUCLEOTIDE SEQUENCE [LARGE SCALE GENOMIC DNA]</scope>
    <source>
        <strain>ATCC BAA-461 / DSM 12804 / CCUG 43448</strain>
    </source>
</reference>
<keyword id="KW-0028">Amino-acid biosynthesis</keyword>
<keyword id="KW-0963">Cytoplasm</keyword>
<keyword id="KW-0521">NADP</keyword>
<keyword id="KW-0560">Oxidoreductase</keyword>
<keyword id="KW-0641">Proline biosynthesis</keyword>
<name>PROA_BORPD</name>
<dbReference type="EC" id="1.2.1.41" evidence="1"/>
<dbReference type="EMBL" id="AM902716">
    <property type="protein sequence ID" value="CAP43669.1"/>
    <property type="molecule type" value="Genomic_DNA"/>
</dbReference>
<dbReference type="SMR" id="A9HWX2"/>
<dbReference type="STRING" id="94624.Bpet3327"/>
<dbReference type="KEGG" id="bpt:Bpet3327"/>
<dbReference type="eggNOG" id="COG0014">
    <property type="taxonomic scope" value="Bacteria"/>
</dbReference>
<dbReference type="UniPathway" id="UPA00098">
    <property type="reaction ID" value="UER00360"/>
</dbReference>
<dbReference type="Proteomes" id="UP000001225">
    <property type="component" value="Chromosome"/>
</dbReference>
<dbReference type="GO" id="GO:0005737">
    <property type="term" value="C:cytoplasm"/>
    <property type="evidence" value="ECO:0007669"/>
    <property type="project" value="UniProtKB-SubCell"/>
</dbReference>
<dbReference type="GO" id="GO:0004350">
    <property type="term" value="F:glutamate-5-semialdehyde dehydrogenase activity"/>
    <property type="evidence" value="ECO:0007669"/>
    <property type="project" value="UniProtKB-UniRule"/>
</dbReference>
<dbReference type="GO" id="GO:0050661">
    <property type="term" value="F:NADP binding"/>
    <property type="evidence" value="ECO:0007669"/>
    <property type="project" value="InterPro"/>
</dbReference>
<dbReference type="GO" id="GO:0055129">
    <property type="term" value="P:L-proline biosynthetic process"/>
    <property type="evidence" value="ECO:0007669"/>
    <property type="project" value="UniProtKB-UniRule"/>
</dbReference>
<dbReference type="CDD" id="cd07079">
    <property type="entry name" value="ALDH_F18-19_ProA-GPR"/>
    <property type="match status" value="1"/>
</dbReference>
<dbReference type="FunFam" id="3.40.309.10:FF:000006">
    <property type="entry name" value="Gamma-glutamyl phosphate reductase"/>
    <property type="match status" value="1"/>
</dbReference>
<dbReference type="Gene3D" id="3.40.605.10">
    <property type="entry name" value="Aldehyde Dehydrogenase, Chain A, domain 1"/>
    <property type="match status" value="1"/>
</dbReference>
<dbReference type="Gene3D" id="3.40.309.10">
    <property type="entry name" value="Aldehyde Dehydrogenase, Chain A, domain 2"/>
    <property type="match status" value="1"/>
</dbReference>
<dbReference type="HAMAP" id="MF_00412">
    <property type="entry name" value="ProA"/>
    <property type="match status" value="1"/>
</dbReference>
<dbReference type="InterPro" id="IPR016161">
    <property type="entry name" value="Ald_DH/histidinol_DH"/>
</dbReference>
<dbReference type="InterPro" id="IPR016163">
    <property type="entry name" value="Ald_DH_C"/>
</dbReference>
<dbReference type="InterPro" id="IPR016162">
    <property type="entry name" value="Ald_DH_N"/>
</dbReference>
<dbReference type="InterPro" id="IPR015590">
    <property type="entry name" value="Aldehyde_DH_dom"/>
</dbReference>
<dbReference type="InterPro" id="IPR020593">
    <property type="entry name" value="G-glutamylP_reductase_CS"/>
</dbReference>
<dbReference type="InterPro" id="IPR012134">
    <property type="entry name" value="Glu-5-SA_DH"/>
</dbReference>
<dbReference type="InterPro" id="IPR000965">
    <property type="entry name" value="GPR_dom"/>
</dbReference>
<dbReference type="NCBIfam" id="NF001221">
    <property type="entry name" value="PRK00197.1"/>
    <property type="match status" value="1"/>
</dbReference>
<dbReference type="NCBIfam" id="TIGR00407">
    <property type="entry name" value="proA"/>
    <property type="match status" value="1"/>
</dbReference>
<dbReference type="PANTHER" id="PTHR11063:SF8">
    <property type="entry name" value="DELTA-1-PYRROLINE-5-CARBOXYLATE SYNTHASE"/>
    <property type="match status" value="1"/>
</dbReference>
<dbReference type="PANTHER" id="PTHR11063">
    <property type="entry name" value="GLUTAMATE SEMIALDEHYDE DEHYDROGENASE"/>
    <property type="match status" value="1"/>
</dbReference>
<dbReference type="Pfam" id="PF00171">
    <property type="entry name" value="Aldedh"/>
    <property type="match status" value="2"/>
</dbReference>
<dbReference type="PIRSF" id="PIRSF000151">
    <property type="entry name" value="GPR"/>
    <property type="match status" value="1"/>
</dbReference>
<dbReference type="SUPFAM" id="SSF53720">
    <property type="entry name" value="ALDH-like"/>
    <property type="match status" value="1"/>
</dbReference>
<dbReference type="PROSITE" id="PS01223">
    <property type="entry name" value="PROA"/>
    <property type="match status" value="1"/>
</dbReference>
<feature type="chain" id="PRO_0000340874" description="Gamma-glutamyl phosphate reductase">
    <location>
        <begin position="1"/>
        <end position="421"/>
    </location>
</feature>
<protein>
    <recommendedName>
        <fullName evidence="1">Gamma-glutamyl phosphate reductase</fullName>
        <shortName evidence="1">GPR</shortName>
        <ecNumber evidence="1">1.2.1.41</ecNumber>
    </recommendedName>
    <alternativeName>
        <fullName evidence="1">Glutamate-5-semialdehyde dehydrogenase</fullName>
    </alternativeName>
    <alternativeName>
        <fullName evidence="1">Glutamyl-gamma-semialdehyde dehydrogenase</fullName>
        <shortName evidence="1">GSA dehydrogenase</shortName>
    </alternativeName>
</protein>